<name>RPB9_SCHPO</name>
<gene>
    <name type="primary">rpb9</name>
    <name type="ORF">SPAPYUG7.04c</name>
</gene>
<organism>
    <name type="scientific">Schizosaccharomyces pombe (strain 972 / ATCC 24843)</name>
    <name type="common">Fission yeast</name>
    <dbReference type="NCBI Taxonomy" id="284812"/>
    <lineage>
        <taxon>Eukaryota</taxon>
        <taxon>Fungi</taxon>
        <taxon>Dikarya</taxon>
        <taxon>Ascomycota</taxon>
        <taxon>Taphrinomycotina</taxon>
        <taxon>Schizosaccharomycetes</taxon>
        <taxon>Schizosaccharomycetales</taxon>
        <taxon>Schizosaccharomycetaceae</taxon>
        <taxon>Schizosaccharomyces</taxon>
    </lineage>
</organism>
<reference key="1">
    <citation type="journal article" date="1998" name="Gene">
        <title>Identification of the gene and the protein of RNA polymerase II subunit 9 (Rpb9) from the fission yeast Schizosaccharomyces pombe.</title>
        <authorList>
            <person name="Sakurai H."/>
            <person name="Kimura M."/>
            <person name="Ishihama A."/>
        </authorList>
    </citation>
    <scope>NUCLEOTIDE SEQUENCE [GENOMIC DNA]</scope>
    <source>
        <strain>JY741</strain>
    </source>
</reference>
<reference key="2">
    <citation type="journal article" date="2000" name="Bioorg. Khim.">
        <title>Chromosomal localization of the rpb9+ and tfa1+ genes encoding components of the mRNA synthesis machinery of Schizosaccharomyces pombe.</title>
        <authorList>
            <person name="Shpakovski G.V."/>
            <person name="Baranova G.M."/>
        </authorList>
    </citation>
    <scope>NUCLEOTIDE SEQUENCE [GENOMIC DNA]</scope>
    <source>
        <strain>972 / ATCC 24843</strain>
    </source>
</reference>
<reference key="3">
    <citation type="journal article" date="2002" name="Nature">
        <title>The genome sequence of Schizosaccharomyces pombe.</title>
        <authorList>
            <person name="Wood V."/>
            <person name="Gwilliam R."/>
            <person name="Rajandream M.A."/>
            <person name="Lyne M.H."/>
            <person name="Lyne R."/>
            <person name="Stewart A."/>
            <person name="Sgouros J.G."/>
            <person name="Peat N."/>
            <person name="Hayles J."/>
            <person name="Baker S.G."/>
            <person name="Basham D."/>
            <person name="Bowman S."/>
            <person name="Brooks K."/>
            <person name="Brown D."/>
            <person name="Brown S."/>
            <person name="Chillingworth T."/>
            <person name="Churcher C.M."/>
            <person name="Collins M."/>
            <person name="Connor R."/>
            <person name="Cronin A."/>
            <person name="Davis P."/>
            <person name="Feltwell T."/>
            <person name="Fraser A."/>
            <person name="Gentles S."/>
            <person name="Goble A."/>
            <person name="Hamlin N."/>
            <person name="Harris D.E."/>
            <person name="Hidalgo J."/>
            <person name="Hodgson G."/>
            <person name="Holroyd S."/>
            <person name="Hornsby T."/>
            <person name="Howarth S."/>
            <person name="Huckle E.J."/>
            <person name="Hunt S."/>
            <person name="Jagels K."/>
            <person name="James K.D."/>
            <person name="Jones L."/>
            <person name="Jones M."/>
            <person name="Leather S."/>
            <person name="McDonald S."/>
            <person name="McLean J."/>
            <person name="Mooney P."/>
            <person name="Moule S."/>
            <person name="Mungall K.L."/>
            <person name="Murphy L.D."/>
            <person name="Niblett D."/>
            <person name="Odell C."/>
            <person name="Oliver K."/>
            <person name="O'Neil S."/>
            <person name="Pearson D."/>
            <person name="Quail M.A."/>
            <person name="Rabbinowitsch E."/>
            <person name="Rutherford K.M."/>
            <person name="Rutter S."/>
            <person name="Saunders D."/>
            <person name="Seeger K."/>
            <person name="Sharp S."/>
            <person name="Skelton J."/>
            <person name="Simmonds M.N."/>
            <person name="Squares R."/>
            <person name="Squares S."/>
            <person name="Stevens K."/>
            <person name="Taylor K."/>
            <person name="Taylor R.G."/>
            <person name="Tivey A."/>
            <person name="Walsh S.V."/>
            <person name="Warren T."/>
            <person name="Whitehead S."/>
            <person name="Woodward J.R."/>
            <person name="Volckaert G."/>
            <person name="Aert R."/>
            <person name="Robben J."/>
            <person name="Grymonprez B."/>
            <person name="Weltjens I."/>
            <person name="Vanstreels E."/>
            <person name="Rieger M."/>
            <person name="Schaefer M."/>
            <person name="Mueller-Auer S."/>
            <person name="Gabel C."/>
            <person name="Fuchs M."/>
            <person name="Duesterhoeft A."/>
            <person name="Fritzc C."/>
            <person name="Holzer E."/>
            <person name="Moestl D."/>
            <person name="Hilbert H."/>
            <person name="Borzym K."/>
            <person name="Langer I."/>
            <person name="Beck A."/>
            <person name="Lehrach H."/>
            <person name="Reinhardt R."/>
            <person name="Pohl T.M."/>
            <person name="Eger P."/>
            <person name="Zimmermann W."/>
            <person name="Wedler H."/>
            <person name="Wambutt R."/>
            <person name="Purnelle B."/>
            <person name="Goffeau A."/>
            <person name="Cadieu E."/>
            <person name="Dreano S."/>
            <person name="Gloux S."/>
            <person name="Lelaure V."/>
            <person name="Mottier S."/>
            <person name="Galibert F."/>
            <person name="Aves S.J."/>
            <person name="Xiang Z."/>
            <person name="Hunt C."/>
            <person name="Moore K."/>
            <person name="Hurst S.M."/>
            <person name="Lucas M."/>
            <person name="Rochet M."/>
            <person name="Gaillardin C."/>
            <person name="Tallada V.A."/>
            <person name="Garzon A."/>
            <person name="Thode G."/>
            <person name="Daga R.R."/>
            <person name="Cruzado L."/>
            <person name="Jimenez J."/>
            <person name="Sanchez M."/>
            <person name="del Rey F."/>
            <person name="Benito J."/>
            <person name="Dominguez A."/>
            <person name="Revuelta J.L."/>
            <person name="Moreno S."/>
            <person name="Armstrong J."/>
            <person name="Forsburg S.L."/>
            <person name="Cerutti L."/>
            <person name="Lowe T."/>
            <person name="McCombie W.R."/>
            <person name="Paulsen I."/>
            <person name="Potashkin J."/>
            <person name="Shpakovski G.V."/>
            <person name="Ussery D."/>
            <person name="Barrell B.G."/>
            <person name="Nurse P."/>
        </authorList>
    </citation>
    <scope>NUCLEOTIDE SEQUENCE [LARGE SCALE GENOMIC DNA]</scope>
    <source>
        <strain>972 / ATCC 24843</strain>
    </source>
</reference>
<protein>
    <recommendedName>
        <fullName>DNA-directed RNA polymerase II subunit RPB9</fullName>
        <shortName>RNA polymerase II subunit B9</shortName>
    </recommendedName>
    <alternativeName>
        <fullName>DNA-directed RNA polymerase II 13.2 kDa polypeptide</fullName>
    </alternativeName>
    <alternativeName>
        <fullName>DNA-directed RNA polymerase II subunit 9</fullName>
    </alternativeName>
</protein>
<evidence type="ECO:0000250" key="1"/>
<evidence type="ECO:0000250" key="2">
    <source>
        <dbReference type="UniProtKB" id="P32529"/>
    </source>
</evidence>
<evidence type="ECO:0000255" key="3"/>
<evidence type="ECO:0000255" key="4">
    <source>
        <dbReference type="PROSITE-ProRule" id="PRU00472"/>
    </source>
</evidence>
<evidence type="ECO:0000255" key="5">
    <source>
        <dbReference type="PROSITE-ProRule" id="PRU10145"/>
    </source>
</evidence>
<evidence type="ECO:0000256" key="6">
    <source>
        <dbReference type="SAM" id="MobiDB-lite"/>
    </source>
</evidence>
<evidence type="ECO:0000305" key="7"/>
<evidence type="ECO:0007829" key="8">
    <source>
        <dbReference type="PDB" id="8QSZ"/>
    </source>
</evidence>
<comment type="function">
    <text evidence="1">DNA-dependent RNA polymerase catalyzes the transcription of DNA into RNA using the four ribonucleoside triphosphates as substrates. Component of RNA polymerase II which synthesizes mRNA precursors and many functional non-coding RNAs. Pol II is the central component of the basal RNA polymerase II transcription machinery. It is composed of mobile elements that move relative to each other. RPB9 is part of the upper jaw surrounding the central large cleft and thought to grab the incoming DNA template (By similarity). Involved in the regulation of transcription elongation.</text>
</comment>
<comment type="subunit">
    <text>Component of the RNA polymerase II (Pol II) complex consisting of 12 subunits.</text>
</comment>
<comment type="subcellular location">
    <subcellularLocation>
        <location evidence="2">Nucleus</location>
        <location evidence="2">Nucleolus</location>
    </subcellularLocation>
</comment>
<comment type="similarity">
    <text evidence="7">Belongs to the archaeal RpoM/eukaryotic RPA12/RPB9/RPC11 RNA polymerase family.</text>
</comment>
<sequence>MSNFQYCIECNNMLYPREDKVDRVLRLACRNCDYSEIAATSKVYRHELQSSNVENTTVSHDASTDPTLPRSDKECPRCHQHEAVFYQTHSRRGDTMMTLIYVCVHCGFAFEEQ</sequence>
<proteinExistence type="evidence at protein level"/>
<accession>O74635</accession>
<dbReference type="EMBL" id="AB007988">
    <property type="protein sequence ID" value="BAA33021.1"/>
    <property type="molecule type" value="Genomic_DNA"/>
</dbReference>
<dbReference type="EMBL" id="AF237418">
    <property type="protein sequence ID" value="AAL55660.1"/>
    <property type="molecule type" value="Genomic_DNA"/>
</dbReference>
<dbReference type="EMBL" id="CU329670">
    <property type="protein sequence ID" value="CAB66313.1"/>
    <property type="molecule type" value="Genomic_DNA"/>
</dbReference>
<dbReference type="PIR" id="T43279">
    <property type="entry name" value="T43279"/>
</dbReference>
<dbReference type="RefSeq" id="NP_594705.1">
    <property type="nucleotide sequence ID" value="NM_001020132.2"/>
</dbReference>
<dbReference type="PDB" id="3H0G">
    <property type="method" value="X-ray"/>
    <property type="resolution" value="3.65 A"/>
    <property type="chains" value="I/U=1-113"/>
</dbReference>
<dbReference type="PDB" id="5U0S">
    <property type="method" value="EM"/>
    <property type="resolution" value="7.80 A"/>
    <property type="chains" value="i=1-113"/>
</dbReference>
<dbReference type="PDB" id="8QSZ">
    <property type="method" value="EM"/>
    <property type="resolution" value="2.67 A"/>
    <property type="chains" value="I=1-113"/>
</dbReference>
<dbReference type="PDBsum" id="3H0G"/>
<dbReference type="PDBsum" id="5U0S"/>
<dbReference type="PDBsum" id="8QSZ"/>
<dbReference type="EMDB" id="EMD-18643"/>
<dbReference type="EMDB" id="EMD-8480"/>
<dbReference type="SMR" id="O74635"/>
<dbReference type="BioGRID" id="277972">
    <property type="interactions" value="105"/>
</dbReference>
<dbReference type="ComplexPortal" id="CPX-2661">
    <property type="entry name" value="DNA-directed RNA polymerase II complex"/>
</dbReference>
<dbReference type="FunCoup" id="O74635">
    <property type="interactions" value="266"/>
</dbReference>
<dbReference type="STRING" id="284812.O74635"/>
<dbReference type="iPTMnet" id="O74635"/>
<dbReference type="PaxDb" id="4896-SPAPYUG7.04c.1"/>
<dbReference type="EnsemblFungi" id="SPAPYUG7.04c.1">
    <property type="protein sequence ID" value="SPAPYUG7.04c.1:pep"/>
    <property type="gene ID" value="SPAPYUG7.04c"/>
</dbReference>
<dbReference type="GeneID" id="2541470"/>
<dbReference type="KEGG" id="spo:2541470"/>
<dbReference type="PomBase" id="SPAPYUG7.04c">
    <property type="gene designation" value="rpb9"/>
</dbReference>
<dbReference type="VEuPathDB" id="FungiDB:SPAPYUG7.04c"/>
<dbReference type="eggNOG" id="KOG2691">
    <property type="taxonomic scope" value="Eukaryota"/>
</dbReference>
<dbReference type="HOGENOM" id="CLU_093932_0_1_1"/>
<dbReference type="InParanoid" id="O74635"/>
<dbReference type="OMA" id="DTSMVLF"/>
<dbReference type="PhylomeDB" id="O74635"/>
<dbReference type="Reactome" id="R-SPO-113418">
    <property type="pathway name" value="Formation of the Early Elongation Complex"/>
</dbReference>
<dbReference type="Reactome" id="R-SPO-5578749">
    <property type="pathway name" value="Transcriptional regulation by small RNAs"/>
</dbReference>
<dbReference type="Reactome" id="R-SPO-674695">
    <property type="pathway name" value="RNA Polymerase II Pre-transcription Events"/>
</dbReference>
<dbReference type="Reactome" id="R-SPO-6781823">
    <property type="pathway name" value="Formation of TC-NER Pre-Incision Complex"/>
</dbReference>
<dbReference type="Reactome" id="R-SPO-6782135">
    <property type="pathway name" value="Dual incision in TC-NER"/>
</dbReference>
<dbReference type="Reactome" id="R-SPO-6782210">
    <property type="pathway name" value="Gap-filling DNA repair synthesis and ligation in TC-NER"/>
</dbReference>
<dbReference type="Reactome" id="R-SPO-6796648">
    <property type="pathway name" value="TP53 Regulates Transcription of DNA Repair Genes"/>
</dbReference>
<dbReference type="Reactome" id="R-SPO-6807505">
    <property type="pathway name" value="RNA polymerase II transcribes snRNA genes"/>
</dbReference>
<dbReference type="Reactome" id="R-SPO-72086">
    <property type="pathway name" value="mRNA Capping"/>
</dbReference>
<dbReference type="Reactome" id="R-SPO-72163">
    <property type="pathway name" value="mRNA Splicing - Major Pathway"/>
</dbReference>
<dbReference type="Reactome" id="R-SPO-72203">
    <property type="pathway name" value="Processing of Capped Intron-Containing Pre-mRNA"/>
</dbReference>
<dbReference type="Reactome" id="R-SPO-73776">
    <property type="pathway name" value="RNA Polymerase II Promoter Escape"/>
</dbReference>
<dbReference type="Reactome" id="R-SPO-73779">
    <property type="pathway name" value="RNA Polymerase II Transcription Pre-Initiation And Promoter Opening"/>
</dbReference>
<dbReference type="Reactome" id="R-SPO-75953">
    <property type="pathway name" value="RNA Polymerase II Transcription Initiation"/>
</dbReference>
<dbReference type="Reactome" id="R-SPO-76042">
    <property type="pathway name" value="RNA Polymerase II Transcription Initiation And Promoter Clearance"/>
</dbReference>
<dbReference type="Reactome" id="R-SPO-77075">
    <property type="pathway name" value="RNA Pol II CTD phosphorylation and interaction with CE"/>
</dbReference>
<dbReference type="Reactome" id="R-SPO-9018519">
    <property type="pathway name" value="Estrogen-dependent gene expression"/>
</dbReference>
<dbReference type="EvolutionaryTrace" id="O74635"/>
<dbReference type="PRO" id="PR:O74635"/>
<dbReference type="Proteomes" id="UP000002485">
    <property type="component" value="Chromosome I"/>
</dbReference>
<dbReference type="GO" id="GO:0005829">
    <property type="term" value="C:cytosol"/>
    <property type="evidence" value="ECO:0007005"/>
    <property type="project" value="PomBase"/>
</dbReference>
<dbReference type="GO" id="GO:0005730">
    <property type="term" value="C:nucleolus"/>
    <property type="evidence" value="ECO:0007669"/>
    <property type="project" value="UniProtKB-SubCell"/>
</dbReference>
<dbReference type="GO" id="GO:0005634">
    <property type="term" value="C:nucleus"/>
    <property type="evidence" value="ECO:0007005"/>
    <property type="project" value="PomBase"/>
</dbReference>
<dbReference type="GO" id="GO:0005665">
    <property type="term" value="C:RNA polymerase II, core complex"/>
    <property type="evidence" value="ECO:0000314"/>
    <property type="project" value="PomBase"/>
</dbReference>
<dbReference type="GO" id="GO:0016591">
    <property type="term" value="C:RNA polymerase II, holoenzyme"/>
    <property type="evidence" value="ECO:0000269"/>
    <property type="project" value="PomBase"/>
</dbReference>
<dbReference type="GO" id="GO:0003899">
    <property type="term" value="F:DNA-directed RNA polymerase activity"/>
    <property type="evidence" value="ECO:0007669"/>
    <property type="project" value="InterPro"/>
</dbReference>
<dbReference type="GO" id="GO:0003676">
    <property type="term" value="F:nucleic acid binding"/>
    <property type="evidence" value="ECO:0007669"/>
    <property type="project" value="InterPro"/>
</dbReference>
<dbReference type="GO" id="GO:0008270">
    <property type="term" value="F:zinc ion binding"/>
    <property type="evidence" value="ECO:0007669"/>
    <property type="project" value="UniProtKB-KW"/>
</dbReference>
<dbReference type="GO" id="GO:0001193">
    <property type="term" value="P:maintenance of transcriptional fidelity during transcription elongation by RNA polymerase II"/>
    <property type="evidence" value="ECO:0000318"/>
    <property type="project" value="GO_Central"/>
</dbReference>
<dbReference type="GO" id="GO:0006367">
    <property type="term" value="P:transcription initiation at RNA polymerase II promoter"/>
    <property type="evidence" value="ECO:0000318"/>
    <property type="project" value="GO_Central"/>
</dbReference>
<dbReference type="GO" id="GO:0006283">
    <property type="term" value="P:transcription-coupled nucleotide-excision repair"/>
    <property type="evidence" value="ECO:0000318"/>
    <property type="project" value="GO_Central"/>
</dbReference>
<dbReference type="CDD" id="cd10508">
    <property type="entry name" value="Zn-ribbon_RPB9"/>
    <property type="match status" value="1"/>
</dbReference>
<dbReference type="FunFam" id="2.20.25.10:FF:000008">
    <property type="entry name" value="DNA-directed RNA polymerase II subunit RPB9"/>
    <property type="match status" value="1"/>
</dbReference>
<dbReference type="FunFam" id="2.20.25.10:FF:000016">
    <property type="entry name" value="DNA-directed RNA polymerase II subunit RPB9"/>
    <property type="match status" value="1"/>
</dbReference>
<dbReference type="Gene3D" id="2.20.25.10">
    <property type="match status" value="2"/>
</dbReference>
<dbReference type="InterPro" id="IPR019761">
    <property type="entry name" value="DNA-dir_RNA_pol-M_15_CS"/>
</dbReference>
<dbReference type="InterPro" id="IPR012164">
    <property type="entry name" value="Rpa12/Rpb9/Rpc10/TFS"/>
</dbReference>
<dbReference type="InterPro" id="IPR001529">
    <property type="entry name" value="Zn_ribbon_RPB9"/>
</dbReference>
<dbReference type="InterPro" id="IPR034012">
    <property type="entry name" value="Zn_ribbon_RPB9_C"/>
</dbReference>
<dbReference type="InterPro" id="IPR001222">
    <property type="entry name" value="Znf_TFIIS"/>
</dbReference>
<dbReference type="PANTHER" id="PTHR11239">
    <property type="entry name" value="DNA-DIRECTED RNA POLYMERASE"/>
    <property type="match status" value="1"/>
</dbReference>
<dbReference type="PANTHER" id="PTHR11239:SF1">
    <property type="entry name" value="DNA-DIRECTED RNA POLYMERASE II SUBUNIT RPB9"/>
    <property type="match status" value="1"/>
</dbReference>
<dbReference type="Pfam" id="PF02150">
    <property type="entry name" value="Zn_ribbon_RPB9"/>
    <property type="match status" value="1"/>
</dbReference>
<dbReference type="Pfam" id="PF01096">
    <property type="entry name" value="Zn_ribbon_TFIIS"/>
    <property type="match status" value="1"/>
</dbReference>
<dbReference type="PIRSF" id="PIRSF005586">
    <property type="entry name" value="RNApol_RpoM"/>
    <property type="match status" value="1"/>
</dbReference>
<dbReference type="SMART" id="SM00661">
    <property type="entry name" value="RPOL9"/>
    <property type="match status" value="1"/>
</dbReference>
<dbReference type="SMART" id="SM00440">
    <property type="entry name" value="ZnF_C2C2"/>
    <property type="match status" value="1"/>
</dbReference>
<dbReference type="SUPFAM" id="SSF57783">
    <property type="entry name" value="Zinc beta-ribbon"/>
    <property type="match status" value="2"/>
</dbReference>
<dbReference type="PROSITE" id="PS01030">
    <property type="entry name" value="RNA_POL_M_15KD"/>
    <property type="match status" value="1"/>
</dbReference>
<dbReference type="PROSITE" id="PS00466">
    <property type="entry name" value="ZF_TFIIS_1"/>
    <property type="match status" value="1"/>
</dbReference>
<dbReference type="PROSITE" id="PS51133">
    <property type="entry name" value="ZF_TFIIS_2"/>
    <property type="match status" value="1"/>
</dbReference>
<keyword id="KW-0002">3D-structure</keyword>
<keyword id="KW-0240">DNA-directed RNA polymerase</keyword>
<keyword id="KW-0479">Metal-binding</keyword>
<keyword id="KW-0539">Nucleus</keyword>
<keyword id="KW-1185">Reference proteome</keyword>
<keyword id="KW-0804">Transcription</keyword>
<keyword id="KW-0862">Zinc</keyword>
<keyword id="KW-0863">Zinc-finger</keyword>
<feature type="chain" id="PRO_0000121473" description="DNA-directed RNA polymerase II subunit RPB9">
    <location>
        <begin position="1"/>
        <end position="113"/>
    </location>
</feature>
<feature type="zinc finger region" description="C4-type" evidence="3">
    <location>
        <begin position="7"/>
        <end position="32"/>
    </location>
</feature>
<feature type="zinc finger region" description="TFIIS-type" evidence="4">
    <location>
        <begin position="71"/>
        <end position="111"/>
    </location>
</feature>
<feature type="region of interest" description="Disordered" evidence="6">
    <location>
        <begin position="54"/>
        <end position="74"/>
    </location>
</feature>
<feature type="compositionally biased region" description="Polar residues" evidence="6">
    <location>
        <begin position="54"/>
        <end position="66"/>
    </location>
</feature>
<feature type="binding site" evidence="5">
    <location>
        <position position="7"/>
    </location>
    <ligand>
        <name>Zn(2+)</name>
        <dbReference type="ChEBI" id="CHEBI:29105"/>
        <label>1</label>
    </ligand>
</feature>
<feature type="binding site" evidence="5">
    <location>
        <position position="10"/>
    </location>
    <ligand>
        <name>Zn(2+)</name>
        <dbReference type="ChEBI" id="CHEBI:29105"/>
        <label>1</label>
    </ligand>
</feature>
<feature type="binding site" evidence="5">
    <location>
        <position position="29"/>
    </location>
    <ligand>
        <name>Zn(2+)</name>
        <dbReference type="ChEBI" id="CHEBI:29105"/>
        <label>1</label>
    </ligand>
</feature>
<feature type="binding site" evidence="5">
    <location>
        <position position="32"/>
    </location>
    <ligand>
        <name>Zn(2+)</name>
        <dbReference type="ChEBI" id="CHEBI:29105"/>
        <label>1</label>
    </ligand>
</feature>
<feature type="binding site" evidence="4">
    <location>
        <position position="75"/>
    </location>
    <ligand>
        <name>Zn(2+)</name>
        <dbReference type="ChEBI" id="CHEBI:29105"/>
        <label>2</label>
    </ligand>
</feature>
<feature type="binding site" evidence="4">
    <location>
        <position position="78"/>
    </location>
    <ligand>
        <name>Zn(2+)</name>
        <dbReference type="ChEBI" id="CHEBI:29105"/>
        <label>2</label>
    </ligand>
</feature>
<feature type="binding site" evidence="4">
    <location>
        <position position="103"/>
    </location>
    <ligand>
        <name>Zn(2+)</name>
        <dbReference type="ChEBI" id="CHEBI:29105"/>
        <label>2</label>
    </ligand>
</feature>
<feature type="binding site" evidence="4">
    <location>
        <position position="106"/>
    </location>
    <ligand>
        <name>Zn(2+)</name>
        <dbReference type="ChEBI" id="CHEBI:29105"/>
        <label>2</label>
    </ligand>
</feature>
<feature type="turn" evidence="8">
    <location>
        <begin position="8"/>
        <end position="10"/>
    </location>
</feature>
<feature type="strand" evidence="8">
    <location>
        <begin position="13"/>
        <end position="19"/>
    </location>
</feature>
<feature type="turn" evidence="8">
    <location>
        <begin position="20"/>
        <end position="23"/>
    </location>
</feature>
<feature type="strand" evidence="8">
    <location>
        <begin position="24"/>
        <end position="33"/>
    </location>
</feature>
<feature type="strand" evidence="8">
    <location>
        <begin position="35"/>
        <end position="37"/>
    </location>
</feature>
<feature type="strand" evidence="8">
    <location>
        <begin position="44"/>
        <end position="47"/>
    </location>
</feature>
<feature type="turn" evidence="8">
    <location>
        <begin position="76"/>
        <end position="78"/>
    </location>
</feature>
<feature type="strand" evidence="8">
    <location>
        <begin position="83"/>
        <end position="87"/>
    </location>
</feature>
<feature type="strand" evidence="8">
    <location>
        <begin position="99"/>
        <end position="106"/>
    </location>
</feature>